<feature type="chain" id="PRO_0000245001" description="Protein Rev">
    <location>
        <begin position="1"/>
        <end position="116"/>
    </location>
</feature>
<feature type="region of interest" description="Homomultimerization" evidence="1">
    <location>
        <begin position="18"/>
        <end position="26"/>
    </location>
</feature>
<feature type="region of interest" description="Disordered" evidence="2">
    <location>
        <begin position="90"/>
        <end position="116"/>
    </location>
</feature>
<feature type="short sequence motif" description="Nuclear localization signal and RNA-binding (RRE)" evidence="1">
    <location>
        <begin position="34"/>
        <end position="50"/>
    </location>
</feature>
<feature type="short sequence motif" description="Nuclear export signal and binding to XPO1" evidence="1">
    <location>
        <begin position="73"/>
        <end position="84"/>
    </location>
</feature>
<feature type="modified residue" description="Phosphoserine; by host CK2" evidence="1">
    <location>
        <position position="5"/>
    </location>
</feature>
<feature type="modified residue" description="Phosphoserine; by host" evidence="1">
    <location>
        <position position="99"/>
    </location>
</feature>
<organism>
    <name type="scientific">Human immunodeficiency virus type 1 group M subtype F2 (isolate MP257)</name>
    <name type="common">HIV-1</name>
    <dbReference type="NCBI Taxonomy" id="388823"/>
    <lineage>
        <taxon>Viruses</taxon>
        <taxon>Riboviria</taxon>
        <taxon>Pararnavirae</taxon>
        <taxon>Artverviricota</taxon>
        <taxon>Revtraviricetes</taxon>
        <taxon>Ortervirales</taxon>
        <taxon>Retroviridae</taxon>
        <taxon>Orthoretrovirinae</taxon>
        <taxon>Lentivirus</taxon>
        <taxon>Human immunodeficiency virus type 1</taxon>
    </lineage>
</organism>
<accession>P0C1L1</accession>
<organismHost>
    <name type="scientific">Homo sapiens</name>
    <name type="common">Human</name>
    <dbReference type="NCBI Taxonomy" id="9606"/>
</organismHost>
<keyword id="KW-0014">AIDS</keyword>
<keyword id="KW-1035">Host cytoplasm</keyword>
<keyword id="KW-1048">Host nucleus</keyword>
<keyword id="KW-0945">Host-virus interaction</keyword>
<keyword id="KW-0488">Methylation</keyword>
<keyword id="KW-0509">mRNA transport</keyword>
<keyword id="KW-0597">Phosphoprotein</keyword>
<keyword id="KW-0694">RNA-binding</keyword>
<keyword id="KW-0813">Transport</keyword>
<protein>
    <recommendedName>
        <fullName evidence="1">Protein Rev</fullName>
    </recommendedName>
    <alternativeName>
        <fullName evidence="1">ART/TRS</fullName>
    </alternativeName>
    <alternativeName>
        <fullName evidence="1">Anti-repression transactivator</fullName>
    </alternativeName>
    <alternativeName>
        <fullName evidence="1">Regulator of expression of viral proteins</fullName>
    </alternativeName>
</protein>
<comment type="function">
    <text evidence="1">Escorts unspliced or incompletely spliced viral pre-mRNAs (late transcripts) out of the nucleus of infected cells. These pre-mRNAs carry a recognition sequence called Rev responsive element (RRE) located in the env gene, that is not present in fully spliced viral mRNAs (early transcripts). This function is essential since most viral proteins are translated from unspliced or partially spliced pre-mRNAs which cannot exit the nucleus by the pathway used by fully processed cellular mRNAs. Rev itself is translated from a fully spliced mRNA that readily exits the nucleus. Rev's nuclear localization signal (NLS) binds directly to KPNB1/Importin beta-1 without previous binding to KPNA1/Importin alpha-1. KPNB1 binds to the GDP bound form of RAN (Ran-GDP) and targets Rev to the nucleus. In the nucleus, the conversion from Ran-GDP to Ran-GTP dissociates Rev from KPNB1 and allows Rev's binding to the RRE in viral pre-mRNAs. Rev multimerization on the RRE via cooperative assembly exposes its nuclear export signal (NES) to the surface. Rev can then form a complex with XPO1/CRM1 and Ran-GTP, leading to nuclear export of the complex. Conversion from Ran-GTP to Ran-GDP mediates dissociation of the Rev/RRE/XPO1/RAN complex, so that Rev can return to the nucleus for a subsequent round of export. Beside KPNB1, also seems to interact with TNPO1/Transportin-1, RANBP5/IPO5 and IPO7/RANBP7 for nuclear import. The nucleoporin-like HRB/RIP is an essential cofactor that probably indirectly interacts with Rev to release HIV RNAs from the perinuclear region to the cytoplasm.</text>
</comment>
<comment type="subunit">
    <text evidence="1">Homomultimer; when bound to the RRE. Multimeric assembly is essential for activity and may involve XPO1. Binds to human KPNB1, XPO1, TNPO1, RANBP5 and IPO7. Interacts with the viral Integrase. Interacts with human KHDRBS1. Interacts with human NAP1; this interaction decreases Rev multimerization and stimulates its activity. Interacts with human DEAD-box helicases DDX3 and DDX24; these interactions may serve for viral RNA export to the cytoplasm and packaging, respectively. Interacts with human PSIP1; this interaction may inhibit HIV-1 DNA integration by promoting dissociation of the Integrase-LEDGF/p75 complex.</text>
</comment>
<comment type="subcellular location">
    <subcellularLocation>
        <location evidence="1">Host nucleus</location>
        <location evidence="1">Host nucleolus</location>
    </subcellularLocation>
    <subcellularLocation>
        <location evidence="1">Host cytoplasm</location>
    </subcellularLocation>
    <text evidence="1">The presence of both nuclear import and nuclear export signals leads to continuous shuttling between the nucleus and cytoplasm.</text>
</comment>
<comment type="domain">
    <text evidence="1">The RNA-binding motif binds to the RRE, a 240 bp stem-and-loop structure present in incompletely spliced viral pre-mRNAs. This region also contains the NLS which mediates nuclear localization via KPNB1 binding and, when the N-terminal sequence is present, nucleolar targeting. These overlapping functions prevent Rev bound to RRE from undesirable return to the nucleus. When Rev binds the RRE, the NLS becomes masked while the NES remains accessible. The leucine-rich NES mediates binding to human XPO1.</text>
</comment>
<comment type="PTM">
    <text evidence="1">Asymmetrically arginine dimethylated at one site by host PRMT6. Methylation impairs the RNA-binding activity and export of viral RNA from the nucleus to the cytoplasm.</text>
</comment>
<comment type="PTM">
    <text evidence="1">Phosphorylated by protein kinase CK2. Presence of, and maybe binding to the N-terminus of the regulatory beta subunit of CK2 is necessary for CK2-mediated Rev's phosphorylation.</text>
</comment>
<comment type="miscellaneous">
    <text evidence="1">HIV-1 lineages are divided in three main groups, M (for Major), O (for Outlier), and N (for New, or Non-M, Non-O). The vast majority of strains found worldwide belong to the group M. Group O seems to be endemic to and largely confined to Cameroon and neighboring countries in West Central Africa, where these viruses represent a small minority of HIV-1 strains. The group N is represented by a limited number of isolates from Cameroonian persons. The group M is further subdivided in 9 clades or subtypes (A to D, F to H, J and K).</text>
</comment>
<comment type="similarity">
    <text evidence="1">Belongs to the HIV-1 REV protein family.</text>
</comment>
<reference key="1">
    <citation type="journal article" date="2000" name="AIDS Res. Hum. Retroviruses">
        <title>Near-full-length genome sequencing of divergent African HIV type 1 subtype F viruses leads to the identification of a new HIV type 1 subtype designated K.</title>
        <authorList>
            <person name="Triques K."/>
            <person name="Bourgeois A."/>
            <person name="Vidale N."/>
            <person name="Mpoudi-Ngole E."/>
            <person name="Mulanga-Kabeya C."/>
            <person name="Nzilambi N."/>
            <person name="Torimiro N."/>
            <person name="Saman E."/>
            <person name="Delaporte E."/>
            <person name="Peeters M."/>
        </authorList>
    </citation>
    <scope>NUCLEOTIDE SEQUENCE [GENOMIC RNA]</scope>
</reference>
<reference key="2">
    <citation type="journal article" date="1999" name="Arch. Biochem. Biophys.">
        <title>The ins and outs of HIV Rev.</title>
        <authorList>
            <person name="Hope T.J."/>
        </authorList>
    </citation>
    <scope>REVIEW</scope>
</reference>
<dbReference type="EMBL" id="AJ249237">
    <property type="status" value="NOT_ANNOTATED_CDS"/>
    <property type="molecule type" value="Genomic_RNA"/>
</dbReference>
<dbReference type="SMR" id="P0C1L1"/>
<dbReference type="Proteomes" id="UP000121652">
    <property type="component" value="Segment"/>
</dbReference>
<dbReference type="GO" id="GO:0030430">
    <property type="term" value="C:host cell cytoplasm"/>
    <property type="evidence" value="ECO:0007669"/>
    <property type="project" value="UniProtKB-SubCell"/>
</dbReference>
<dbReference type="GO" id="GO:0044196">
    <property type="term" value="C:host cell nucleolus"/>
    <property type="evidence" value="ECO:0007669"/>
    <property type="project" value="UniProtKB-SubCell"/>
</dbReference>
<dbReference type="GO" id="GO:0003700">
    <property type="term" value="F:DNA-binding transcription factor activity"/>
    <property type="evidence" value="ECO:0007669"/>
    <property type="project" value="UniProtKB-UniRule"/>
</dbReference>
<dbReference type="GO" id="GO:0003723">
    <property type="term" value="F:RNA binding"/>
    <property type="evidence" value="ECO:0007669"/>
    <property type="project" value="UniProtKB-UniRule"/>
</dbReference>
<dbReference type="GO" id="GO:0051028">
    <property type="term" value="P:mRNA transport"/>
    <property type="evidence" value="ECO:0007669"/>
    <property type="project" value="UniProtKB-UniRule"/>
</dbReference>
<dbReference type="GO" id="GO:0016032">
    <property type="term" value="P:viral process"/>
    <property type="evidence" value="ECO:0007669"/>
    <property type="project" value="UniProtKB-UniRule"/>
</dbReference>
<dbReference type="Gene3D" id="6.10.140.630">
    <property type="match status" value="1"/>
</dbReference>
<dbReference type="HAMAP" id="MF_04077">
    <property type="entry name" value="REV_HIV1"/>
    <property type="match status" value="1"/>
</dbReference>
<dbReference type="InterPro" id="IPR000625">
    <property type="entry name" value="REV_protein"/>
</dbReference>
<dbReference type="Pfam" id="PF00424">
    <property type="entry name" value="REV"/>
    <property type="match status" value="1"/>
</dbReference>
<proteinExistence type="inferred from homology"/>
<sequence>MAGRSGDRDEELLKAVRYIKILYQSNPYPKLEGTRKARRNRRRRWRARQRQIHQISERILSTCLGRLQEPVRLQLPLLEKLHINCSEDCGQGTEKGVGSPQISVESRAVLGSGTKE</sequence>
<gene>
    <name evidence="1" type="primary">rev</name>
</gene>
<name>REV_HV1M2</name>
<evidence type="ECO:0000255" key="1">
    <source>
        <dbReference type="HAMAP-Rule" id="MF_04077"/>
    </source>
</evidence>
<evidence type="ECO:0000256" key="2">
    <source>
        <dbReference type="SAM" id="MobiDB-lite"/>
    </source>
</evidence>